<keyword id="KW-1185">Reference proteome</keyword>
<keyword id="KW-0808">Transferase</keyword>
<reference key="1">
    <citation type="submission" date="2006-01" db="EMBL/GenBank/DDBJ databases">
        <title>Complete sequence of Rhodopseudomonas palustris HaA2.</title>
        <authorList>
            <consortium name="US DOE Joint Genome Institute"/>
            <person name="Copeland A."/>
            <person name="Lucas S."/>
            <person name="Lapidus A."/>
            <person name="Barry K."/>
            <person name="Detter J.C."/>
            <person name="Glavina T."/>
            <person name="Hammon N."/>
            <person name="Israni S."/>
            <person name="Pitluck S."/>
            <person name="Chain P."/>
            <person name="Malfatti S."/>
            <person name="Shin M."/>
            <person name="Vergez L."/>
            <person name="Schmutz J."/>
            <person name="Larimer F."/>
            <person name="Land M."/>
            <person name="Hauser L."/>
            <person name="Pelletier D.A."/>
            <person name="Kyrpides N."/>
            <person name="Anderson I."/>
            <person name="Oda Y."/>
            <person name="Harwood C.S."/>
            <person name="Richardson P."/>
        </authorList>
    </citation>
    <scope>NUCLEOTIDE SEQUENCE [LARGE SCALE GENOMIC DNA]</scope>
    <source>
        <strain>HaA2</strain>
    </source>
</reference>
<feature type="chain" id="PRO_0000300993" description="Formyl-CoA:oxalate CoA-transferase">
    <location>
        <begin position="1"/>
        <end position="425"/>
    </location>
</feature>
<feature type="active site" description="Nucleophile" evidence="2">
    <location>
        <position position="168"/>
    </location>
</feature>
<feature type="binding site" evidence="1">
    <location>
        <begin position="17"/>
        <end position="18"/>
    </location>
    <ligand>
        <name>CoA</name>
        <dbReference type="ChEBI" id="CHEBI:57287"/>
    </ligand>
</feature>
<feature type="binding site" evidence="2">
    <location>
        <position position="38"/>
    </location>
    <ligand>
        <name>CoA</name>
        <dbReference type="ChEBI" id="CHEBI:57287"/>
    </ligand>
</feature>
<feature type="binding site" evidence="1">
    <location>
        <begin position="72"/>
        <end position="75"/>
    </location>
    <ligand>
        <name>CoA</name>
        <dbReference type="ChEBI" id="CHEBI:57287"/>
    </ligand>
</feature>
<feature type="binding site" evidence="1">
    <location>
        <begin position="96"/>
        <end position="98"/>
    </location>
    <ligand>
        <name>CoA</name>
        <dbReference type="ChEBI" id="CHEBI:57287"/>
    </ligand>
</feature>
<feature type="binding site" evidence="2">
    <location>
        <position position="104"/>
    </location>
    <ligand>
        <name>CoA</name>
        <dbReference type="ChEBI" id="CHEBI:57287"/>
    </ligand>
</feature>
<feature type="binding site" evidence="1">
    <location>
        <begin position="136"/>
        <end position="139"/>
    </location>
    <ligand>
        <name>CoA</name>
        <dbReference type="ChEBI" id="CHEBI:57287"/>
    </ligand>
</feature>
<feature type="binding site" evidence="1">
    <location>
        <begin position="247"/>
        <end position="249"/>
    </location>
    <ligand>
        <name>substrate</name>
    </ligand>
</feature>
<protein>
    <recommendedName>
        <fullName>Formyl-CoA:oxalate CoA-transferase</fullName>
        <shortName>FCOCT</shortName>
        <ecNumber evidence="2">2.8.3.16</ecNumber>
    </recommendedName>
    <alternativeName>
        <fullName evidence="2">Formyl-coenzyme A transferase</fullName>
        <shortName evidence="2">Formyl-CoA transferase</shortName>
    </alternativeName>
</protein>
<sequence>MTKALDGVRILDFTHVQSGPTCTQLLAWFGADVIKVERPGTGDITRGQLQDIPKVDSLYFTMLNHNKRSITLDTKNPKGKEVLTALIRSCDVLVENFGPGVLDRMGFTWDKIQEINPRMIVASIKGFGPGPYEDCKVYENVAQCTGGAASTTGFRDGPPLVTGAQIGDSGTGLHLALGIVTALYQRHHTGRGQRVTAAMQDGVLNLSRVKLRDQQRLAHGPLKEYSQFGEGIPFGDAVPRAGNDSGGGQPGRILKCKGWETDPNAYIYFIAQAPVWEKICDVIGETGWKTHPDYATPPARLKHLNDIFARIEQWTMTKTKFEAMDILNRDDIPCGPILSMKELAEDASLRATGTIVEVDHPTRGKYLSVGNPIKLSDSPTHVERSPLLGEHTDEILRDVLGFNDHQVAEIHDSGALAPPRKQAAE</sequence>
<organism>
    <name type="scientific">Rhodopseudomonas palustris (strain HaA2)</name>
    <dbReference type="NCBI Taxonomy" id="316058"/>
    <lineage>
        <taxon>Bacteria</taxon>
        <taxon>Pseudomonadati</taxon>
        <taxon>Pseudomonadota</taxon>
        <taxon>Alphaproteobacteria</taxon>
        <taxon>Hyphomicrobiales</taxon>
        <taxon>Nitrobacteraceae</taxon>
        <taxon>Rhodopseudomonas</taxon>
    </lineage>
</organism>
<name>FCTA_RHOP2</name>
<evidence type="ECO:0000250" key="1"/>
<evidence type="ECO:0000255" key="2">
    <source>
        <dbReference type="HAMAP-Rule" id="MF_00742"/>
    </source>
</evidence>
<comment type="function">
    <text evidence="1">Involved in the catabolism of oxalate and in the adapatation to low pH via the induction of the oxalate-dependent acid tolerance response (ATR). Catalyzes the transfer of the CoA moiety from formyl-CoA to oxalate (By similarity).</text>
</comment>
<comment type="catalytic activity">
    <reaction evidence="2">
        <text>formyl-CoA + oxalate = oxalyl-CoA + formate</text>
        <dbReference type="Rhea" id="RHEA:16545"/>
        <dbReference type="ChEBI" id="CHEBI:15740"/>
        <dbReference type="ChEBI" id="CHEBI:30623"/>
        <dbReference type="ChEBI" id="CHEBI:57376"/>
        <dbReference type="ChEBI" id="CHEBI:57388"/>
        <dbReference type="EC" id="2.8.3.16"/>
    </reaction>
</comment>
<comment type="pathway">
    <text evidence="2">Metabolic intermediate degradation; oxalate degradation; CO(2) and formate from oxalate: step 1/2.</text>
</comment>
<comment type="subunit">
    <text evidence="2">Homodimer.</text>
</comment>
<comment type="similarity">
    <text evidence="2">Belongs to the CoA-transferase III family. Frc subfamily.</text>
</comment>
<gene>
    <name evidence="2" type="primary">frc</name>
    <name type="ordered locus">RPB_3427</name>
</gene>
<proteinExistence type="inferred from homology"/>
<dbReference type="EC" id="2.8.3.16" evidence="2"/>
<dbReference type="EMBL" id="CP000250">
    <property type="protein sequence ID" value="ABD08123.1"/>
    <property type="molecule type" value="Genomic_DNA"/>
</dbReference>
<dbReference type="RefSeq" id="WP_011442307.1">
    <property type="nucleotide sequence ID" value="NC_007778.1"/>
</dbReference>
<dbReference type="SMR" id="Q2IUI7"/>
<dbReference type="STRING" id="316058.RPB_3427"/>
<dbReference type="KEGG" id="rpb:RPB_3427"/>
<dbReference type="eggNOG" id="COG1804">
    <property type="taxonomic scope" value="Bacteria"/>
</dbReference>
<dbReference type="HOGENOM" id="CLU_033975_2_1_5"/>
<dbReference type="OrthoDB" id="9806585at2"/>
<dbReference type="UniPathway" id="UPA00540">
    <property type="reaction ID" value="UER00598"/>
</dbReference>
<dbReference type="Proteomes" id="UP000008809">
    <property type="component" value="Chromosome"/>
</dbReference>
<dbReference type="GO" id="GO:0033608">
    <property type="term" value="F:formyl-CoA transferase activity"/>
    <property type="evidence" value="ECO:0007669"/>
    <property type="project" value="UniProtKB-EC"/>
</dbReference>
<dbReference type="GO" id="GO:0033611">
    <property type="term" value="P:oxalate catabolic process"/>
    <property type="evidence" value="ECO:0007669"/>
    <property type="project" value="UniProtKB-UniRule"/>
</dbReference>
<dbReference type="Gene3D" id="3.40.50.10540">
    <property type="entry name" value="Crotonobetainyl-coa:carnitine coa-transferase, domain 1"/>
    <property type="match status" value="1"/>
</dbReference>
<dbReference type="Gene3D" id="3.30.1540.10">
    <property type="entry name" value="formyl-coa transferase, domain 3"/>
    <property type="match status" value="1"/>
</dbReference>
<dbReference type="HAMAP" id="MF_00742">
    <property type="entry name" value="Formyl_CoA_transfer"/>
    <property type="match status" value="1"/>
</dbReference>
<dbReference type="InterPro" id="IPR050483">
    <property type="entry name" value="CoA-transferase_III_domain"/>
</dbReference>
<dbReference type="InterPro" id="IPR003673">
    <property type="entry name" value="CoA-Trfase_fam_III"/>
</dbReference>
<dbReference type="InterPro" id="IPR044855">
    <property type="entry name" value="CoA-Trfase_III_dom3_sf"/>
</dbReference>
<dbReference type="InterPro" id="IPR023606">
    <property type="entry name" value="CoA-Trfase_III_dom_1_sf"/>
</dbReference>
<dbReference type="InterPro" id="IPR017659">
    <property type="entry name" value="Formyl_CoA_transfer"/>
</dbReference>
<dbReference type="NCBIfam" id="TIGR03253">
    <property type="entry name" value="oxalate_frc"/>
    <property type="match status" value="1"/>
</dbReference>
<dbReference type="NCBIfam" id="NF003809">
    <property type="entry name" value="PRK05398.1"/>
    <property type="match status" value="1"/>
</dbReference>
<dbReference type="PANTHER" id="PTHR48207">
    <property type="entry name" value="SUCCINATE--HYDROXYMETHYLGLUTARATE COA-TRANSFERASE"/>
    <property type="match status" value="1"/>
</dbReference>
<dbReference type="PANTHER" id="PTHR48207:SF3">
    <property type="entry name" value="SUCCINATE--HYDROXYMETHYLGLUTARATE COA-TRANSFERASE"/>
    <property type="match status" value="1"/>
</dbReference>
<dbReference type="Pfam" id="PF02515">
    <property type="entry name" value="CoA_transf_3"/>
    <property type="match status" value="1"/>
</dbReference>
<dbReference type="SUPFAM" id="SSF89796">
    <property type="entry name" value="CoA-transferase family III (CaiB/BaiF)"/>
    <property type="match status" value="1"/>
</dbReference>
<accession>Q2IUI7</accession>